<organism>
    <name type="scientific">Mus musculus</name>
    <name type="common">Mouse</name>
    <dbReference type="NCBI Taxonomy" id="10090"/>
    <lineage>
        <taxon>Eukaryota</taxon>
        <taxon>Metazoa</taxon>
        <taxon>Chordata</taxon>
        <taxon>Craniata</taxon>
        <taxon>Vertebrata</taxon>
        <taxon>Euteleostomi</taxon>
        <taxon>Mammalia</taxon>
        <taxon>Eutheria</taxon>
        <taxon>Euarchontoglires</taxon>
        <taxon>Glires</taxon>
        <taxon>Rodentia</taxon>
        <taxon>Myomorpha</taxon>
        <taxon>Muroidea</taxon>
        <taxon>Muridae</taxon>
        <taxon>Murinae</taxon>
        <taxon>Mus</taxon>
        <taxon>Mus</taxon>
    </lineage>
</organism>
<proteinExistence type="evidence at protein level"/>
<comment type="function">
    <text evidence="1">Catalytic component of a structure-specific DNA repair endonuclease responsible for the 5-prime incision during DNA repair, and which is essential for nucleotide excision repair (NER) and interstrand cross-link (ICL) repair.</text>
</comment>
<comment type="cofactor">
    <cofactor evidence="1">
        <name>Mg(2+)</name>
        <dbReference type="ChEBI" id="CHEBI:18420"/>
    </cofactor>
</comment>
<comment type="subunit">
    <text evidence="1">Heterodimer composed of ERCC1 and ERCC4/XPF. Interacts with SLX4/BTBD12; this interaction is direct and links the ERCC1-ERCC4/XPF complex to SLX4, which may coordinate the action of the structure-specific endonuclease during DNA repair.</text>
</comment>
<comment type="subcellular location">
    <subcellularLocation>
        <location evidence="1">Nucleus</location>
    </subcellularLocation>
    <subcellularLocation>
        <location evidence="1">Chromosome</location>
    </subcellularLocation>
    <text evidence="1">Localizes to sites of DNA damage.</text>
</comment>
<comment type="PTM">
    <text evidence="1">Acetylation at Lys-912 by KAT5 promotes interaction with ERCC1 by disrupting a salt bridge between Asp-908 and Lys-912, thereby exposing a second binding site for ERCC1 (By similarity). Deacetylated by SIRT1 (By similarity).</text>
</comment>
<comment type="similarity">
    <text evidence="6">Belongs to the XPF family.</text>
</comment>
<comment type="sequence caution" evidence="6">
    <conflict type="erroneous initiation">
        <sequence resource="EMBL-CDS" id="AAH26792"/>
    </conflict>
</comment>
<accession>Q9QZD4</accession>
<accession>O54810</accession>
<accession>Q8R0I3</accession>
<protein>
    <recommendedName>
        <fullName>DNA repair endonuclease XPF</fullName>
        <ecNumber evidence="1">3.1.-.-</ecNumber>
    </recommendedName>
    <alternativeName>
        <fullName>DNA excision repair protein ERCC-4</fullName>
    </alternativeName>
</protein>
<sequence length="917" mass="103690">MEPGLSGERRSMAPLLEYERQQVLELLDSDGLVVCARGLGTDRLLYHFLRLHCHPACLVLVLNTQPAEEEYFINQLKIEGVEHLPRRVTNEIASNSRYEVYTQGGIIFATSRILVVDFLTGRIPSDLITGILVYRAHRIIESCQEAFILRLFRQKNKRGFIKAFTDNAVAFDTGFCHVERVMRNLFVRKLYLWPRFHVAVNSFLEQHKPEVVEIHVSMTPAMLAIQTAILDILNACLKELKCHNPSLEVEDLSLENALGKPFDKTIRHYLDPLWHQLGAKTKSLVQDLKILRTLLQYLSQYDCVTFLNLLESLRATEKVFGQNSGWLFLDASTSMFVNARARVYRVPDVKLNKKAKTSEKTSSPEVQETKKELVLESNPKWEALTDVLKEIEAENKESEALGGPGRVLICASDDRTCCQLRDYLSAGAETFLLRLYRKTFEKDGKAEEVWVNVRKGDGPKRTTKSDKRPKAAPNKERASAKRGAPLKRKKQELTLTQVLGSAEEPPEDKALEEDLCRQTSSSPEGCGVEIKRESFDLNVSSDAAYGILKEPLTIIHPLLGCSDPYALTRVLHEVEPRYVVLYDAELTFVRQLEIYRASRPGKPLRVYFLIYGGSTEEQRYLTALRKEKEAFEKLIREKASMVVPEEREGRDETNLDLARGSAALDAPTDTRKAGGQEQNGTQSSIVVDMREFRSELPSLIHRRGIDIEPVTLEVGDYILTPELCVERKSVSDLIGSLHSGRLYSQCLAMSRYYRRPVLLIEFDPSKPFSLAPRGAFFQEMSSSDVSSKLTLLTLHFPRLRLLWCPSPHATAELFEELKQNKPQPDAATAMAITADSETLPESDRYNPGPQDFVLKMPGVNAKNCRSLMNQVKNIAELATLSLERLTTILGHSGNAKQLHDFLHTAYADLVSKGRVRK</sequence>
<gene>
    <name evidence="5 7" type="primary">Ercc4</name>
    <name evidence="4" type="synonym">Xpf</name>
</gene>
<feature type="chain" id="PRO_0000198854" description="DNA repair endonuclease XPF">
    <location>
        <begin position="1"/>
        <end position="917"/>
    </location>
</feature>
<feature type="domain" description="ERCC4">
    <location>
        <begin position="684"/>
        <end position="764"/>
    </location>
</feature>
<feature type="region of interest" description="Helicase-like" evidence="1">
    <location>
        <begin position="1"/>
        <end position="457"/>
    </location>
</feature>
<feature type="region of interest" description="Leucine-zipper 1" evidence="1">
    <location>
        <begin position="233"/>
        <end position="254"/>
    </location>
</feature>
<feature type="region of interest" description="Leucine-zipper 2" evidence="1">
    <location>
        <begin position="270"/>
        <end position="298"/>
    </location>
</feature>
<feature type="region of interest" description="Disordered" evidence="3">
    <location>
        <begin position="454"/>
        <end position="524"/>
    </location>
</feature>
<feature type="region of interest" description="Disordered" evidence="3">
    <location>
        <begin position="643"/>
        <end position="681"/>
    </location>
</feature>
<feature type="region of interest" description="Nuclease" evidence="1">
    <location>
        <begin position="659"/>
        <end position="814"/>
    </location>
</feature>
<feature type="region of interest" description="HhH2, dimerization with ERCC1" evidence="1">
    <location>
        <begin position="838"/>
        <end position="906"/>
    </location>
</feature>
<feature type="short sequence motif" description="Nuclear localization signal" evidence="2">
    <location>
        <begin position="487"/>
        <end position="492"/>
    </location>
</feature>
<feature type="compositionally biased region" description="Basic and acidic residues" evidence="3">
    <location>
        <begin position="454"/>
        <end position="479"/>
    </location>
</feature>
<feature type="compositionally biased region" description="Basic and acidic residues" evidence="3">
    <location>
        <begin position="507"/>
        <end position="516"/>
    </location>
</feature>
<feature type="compositionally biased region" description="Basic and acidic residues" evidence="3">
    <location>
        <begin position="643"/>
        <end position="653"/>
    </location>
</feature>
<feature type="modified residue" description="N6-acetyllysine" evidence="1">
    <location>
        <position position="289"/>
    </location>
</feature>
<feature type="modified residue" description="Phosphoserine" evidence="8">
    <location>
        <position position="522"/>
    </location>
</feature>
<feature type="modified residue" description="Phosphoserine" evidence="8">
    <location>
        <position position="765"/>
    </location>
</feature>
<feature type="modified residue" description="N6-acetyllysine" evidence="1">
    <location>
        <position position="912"/>
    </location>
</feature>
<feature type="sequence conflict" description="In Ref. 1; AAF03157." evidence="6" ref="1">
    <original>D</original>
    <variation>N</variation>
    <location>
        <position position="30"/>
    </location>
</feature>
<name>XPF_MOUSE</name>
<evidence type="ECO:0000250" key="1">
    <source>
        <dbReference type="UniProtKB" id="Q92889"/>
    </source>
</evidence>
<evidence type="ECO:0000255" key="2"/>
<evidence type="ECO:0000256" key="3">
    <source>
        <dbReference type="SAM" id="MobiDB-lite"/>
    </source>
</evidence>
<evidence type="ECO:0000303" key="4">
    <source>
    </source>
</evidence>
<evidence type="ECO:0000303" key="5">
    <source ref="2"/>
</evidence>
<evidence type="ECO:0000305" key="6"/>
<evidence type="ECO:0000312" key="7">
    <source>
        <dbReference type="MGI" id="MGI:1354163"/>
    </source>
</evidence>
<evidence type="ECO:0007744" key="8">
    <source>
    </source>
</evidence>
<reference key="1">
    <citation type="journal article" date="1999" name="Genomics">
        <title>Characterization of the mouse xpf DNA repair gene and differential expression during spermatogenesis.</title>
        <authorList>
            <person name="Shannon M."/>
            <person name="Lamerdin J.E."/>
            <person name="Richardson L."/>
            <person name="McCutchen-Maloney S.L."/>
            <person name="Hwang M.H."/>
            <person name="Handel M.A."/>
            <person name="Stubbs L."/>
            <person name="Thelen M.P."/>
        </authorList>
    </citation>
    <scope>NUCLEOTIDE SEQUENCE [MRNA]</scope>
</reference>
<reference key="2">
    <citation type="submission" date="1998-02" db="EMBL/GenBank/DDBJ databases">
        <title>Sequence analysis of a mouse BAC containing the DNA repair gene Ercc-4 (XPF).</title>
        <authorList>
            <person name="Lamerdin J.E."/>
            <person name="McCready P.M."/>
            <person name="Skowronski E."/>
            <person name="Adamson A.W."/>
            <person name="Burkhart-Schultz K."/>
            <person name="Gordon L."/>
            <person name="Kyle A."/>
            <person name="Ramirez M."/>
            <person name="Stilwagen S."/>
            <person name="Phan H."/>
            <person name="Velasco N."/>
            <person name="Garnes J."/>
            <person name="Danganan L."/>
            <person name="Poundstone P."/>
            <person name="Christensen M."/>
            <person name="Georgescu A."/>
            <person name="Avila J."/>
            <person name="Liu S."/>
            <person name="Attix C."/>
            <person name="Andreise T."/>
            <person name="Trankheim M."/>
            <person name="Amico-Keller G."/>
            <person name="Coefield J."/>
            <person name="Duarte S."/>
            <person name="Lucas S."/>
            <person name="Bruce R."/>
            <person name="Thomas P."/>
            <person name="Quan G."/>
            <person name="Kronmiller B."/>
            <person name="Arellano A."/>
            <person name="Montgomery M."/>
            <person name="Ow D."/>
            <person name="Nolan M."/>
            <person name="Trong S."/>
            <person name="Kobayashi A."/>
            <person name="Olsen A.O."/>
            <person name="Carrano A.V."/>
        </authorList>
    </citation>
    <scope>NUCLEOTIDE SEQUENCE [GENOMIC DNA]</scope>
</reference>
<reference key="3">
    <citation type="journal article" date="2004" name="Genome Res.">
        <title>The status, quality, and expansion of the NIH full-length cDNA project: the Mammalian Gene Collection (MGC).</title>
        <authorList>
            <consortium name="The MGC Project Team"/>
        </authorList>
    </citation>
    <scope>NUCLEOTIDE SEQUENCE [LARGE SCALE MRNA] OF 5-917</scope>
    <source>
        <tissue>Salivary gland</tissue>
    </source>
</reference>
<reference key="4">
    <citation type="journal article" date="2010" name="Cell">
        <title>A tissue-specific atlas of mouse protein phosphorylation and expression.</title>
        <authorList>
            <person name="Huttlin E.L."/>
            <person name="Jedrychowski M.P."/>
            <person name="Elias J.E."/>
            <person name="Goswami T."/>
            <person name="Rad R."/>
            <person name="Beausoleil S.A."/>
            <person name="Villen J."/>
            <person name="Haas W."/>
            <person name="Sowa M.E."/>
            <person name="Gygi S.P."/>
        </authorList>
    </citation>
    <scope>PHOSPHORYLATION [LARGE SCALE ANALYSIS] AT SER-522 AND SER-765</scope>
    <scope>IDENTIFICATION BY MASS SPECTROMETRY [LARGE SCALE ANALYSIS]</scope>
    <source>
        <tissue>Brain</tissue>
        <tissue>Brown adipose tissue</tissue>
        <tissue>Spleen</tissue>
        <tissue>Testis</tissue>
    </source>
</reference>
<keyword id="KW-0007">Acetylation</keyword>
<keyword id="KW-0158">Chromosome</keyword>
<keyword id="KW-0227">DNA damage</keyword>
<keyword id="KW-0234">DNA repair</keyword>
<keyword id="KW-0238">DNA-binding</keyword>
<keyword id="KW-0255">Endonuclease</keyword>
<keyword id="KW-0378">Hydrolase</keyword>
<keyword id="KW-0460">Magnesium</keyword>
<keyword id="KW-0540">Nuclease</keyword>
<keyword id="KW-0539">Nucleus</keyword>
<keyword id="KW-0597">Phosphoprotein</keyword>
<keyword id="KW-1185">Reference proteome</keyword>
<keyword id="KW-0677">Repeat</keyword>
<dbReference type="EC" id="3.1.-.-" evidence="1"/>
<dbReference type="EMBL" id="AF189285">
    <property type="protein sequence ID" value="AAF03157.1"/>
    <property type="molecule type" value="mRNA"/>
</dbReference>
<dbReference type="EMBL" id="AC004155">
    <property type="protein sequence ID" value="AAC03240.1"/>
    <property type="molecule type" value="Genomic_DNA"/>
</dbReference>
<dbReference type="EMBL" id="BC026792">
    <property type="protein sequence ID" value="AAH26792.1"/>
    <property type="status" value="ALT_INIT"/>
    <property type="molecule type" value="mRNA"/>
</dbReference>
<dbReference type="CCDS" id="CCDS37256.1"/>
<dbReference type="RefSeq" id="NP_056584.2">
    <property type="nucleotide sequence ID" value="NM_015769.2"/>
</dbReference>
<dbReference type="SMR" id="Q9QZD4"/>
<dbReference type="BioGRID" id="206047">
    <property type="interactions" value="5"/>
</dbReference>
<dbReference type="ComplexPortal" id="CPX-491">
    <property type="entry name" value="Ercc1-Xpf endonuclease complex"/>
</dbReference>
<dbReference type="FunCoup" id="Q9QZD4">
    <property type="interactions" value="4087"/>
</dbReference>
<dbReference type="STRING" id="10090.ENSMUSP00000023206"/>
<dbReference type="iPTMnet" id="Q9QZD4"/>
<dbReference type="PhosphoSitePlus" id="Q9QZD4"/>
<dbReference type="jPOST" id="Q9QZD4"/>
<dbReference type="PaxDb" id="10090-ENSMUSP00000023206"/>
<dbReference type="PeptideAtlas" id="Q9QZD4"/>
<dbReference type="ProteomicsDB" id="299782"/>
<dbReference type="Pumba" id="Q9QZD4"/>
<dbReference type="Antibodypedia" id="24811">
    <property type="antibodies" value="549 antibodies from 32 providers"/>
</dbReference>
<dbReference type="Ensembl" id="ENSMUST00000023206.14">
    <property type="protein sequence ID" value="ENSMUSP00000023206.8"/>
    <property type="gene ID" value="ENSMUSG00000022545.14"/>
</dbReference>
<dbReference type="GeneID" id="50505"/>
<dbReference type="KEGG" id="mmu:50505"/>
<dbReference type="UCSC" id="uc007yfx.2">
    <property type="organism name" value="mouse"/>
</dbReference>
<dbReference type="AGR" id="MGI:1354163"/>
<dbReference type="CTD" id="2072"/>
<dbReference type="MGI" id="MGI:1354163">
    <property type="gene designation" value="Ercc4"/>
</dbReference>
<dbReference type="VEuPathDB" id="HostDB:ENSMUSG00000022545"/>
<dbReference type="eggNOG" id="KOG0442">
    <property type="taxonomic scope" value="Eukaryota"/>
</dbReference>
<dbReference type="GeneTree" id="ENSGT00390000004394"/>
<dbReference type="HOGENOM" id="CLU_002265_1_0_1"/>
<dbReference type="InParanoid" id="Q9QZD4"/>
<dbReference type="OMA" id="THILDIM"/>
<dbReference type="OrthoDB" id="361020at2759"/>
<dbReference type="PhylomeDB" id="Q9QZD4"/>
<dbReference type="TreeFam" id="TF101234"/>
<dbReference type="Reactome" id="R-MMU-5685938">
    <property type="pathway name" value="HDR through Single Strand Annealing (SSA)"/>
</dbReference>
<dbReference type="Reactome" id="R-MMU-5696395">
    <property type="pathway name" value="Formation of Incision Complex in GG-NER"/>
</dbReference>
<dbReference type="Reactome" id="R-MMU-5696400">
    <property type="pathway name" value="Dual Incision in GG-NER"/>
</dbReference>
<dbReference type="Reactome" id="R-MMU-6782135">
    <property type="pathway name" value="Dual incision in TC-NER"/>
</dbReference>
<dbReference type="Reactome" id="R-MMU-6783310">
    <property type="pathway name" value="Fanconi Anemia Pathway"/>
</dbReference>
<dbReference type="BioGRID-ORCS" id="50505">
    <property type="hits" value="12 hits in 116 CRISPR screens"/>
</dbReference>
<dbReference type="ChiTaRS" id="Ercc4">
    <property type="organism name" value="mouse"/>
</dbReference>
<dbReference type="PRO" id="PR:Q9QZD4"/>
<dbReference type="Proteomes" id="UP000000589">
    <property type="component" value="Chromosome 16"/>
</dbReference>
<dbReference type="RNAct" id="Q9QZD4">
    <property type="molecule type" value="protein"/>
</dbReference>
<dbReference type="Bgee" id="ENSMUSG00000022545">
    <property type="expression patterns" value="Expressed in metanephric loop of Henle and 202 other cell types or tissues"/>
</dbReference>
<dbReference type="ExpressionAtlas" id="Q9QZD4">
    <property type="expression patterns" value="baseline and differential"/>
</dbReference>
<dbReference type="GO" id="GO:0000781">
    <property type="term" value="C:chromosome, telomeric region"/>
    <property type="evidence" value="ECO:0007669"/>
    <property type="project" value="Ensembl"/>
</dbReference>
<dbReference type="GO" id="GO:0070522">
    <property type="term" value="C:ERCC4-ERCC1 complex"/>
    <property type="evidence" value="ECO:0000250"/>
    <property type="project" value="UniProtKB"/>
</dbReference>
<dbReference type="GO" id="GO:0000109">
    <property type="term" value="C:nucleotide-excision repair complex"/>
    <property type="evidence" value="ECO:0000266"/>
    <property type="project" value="MGI"/>
</dbReference>
<dbReference type="GO" id="GO:0000110">
    <property type="term" value="C:nucleotide-excision repair factor 1 complex"/>
    <property type="evidence" value="ECO:0007669"/>
    <property type="project" value="Ensembl"/>
</dbReference>
<dbReference type="GO" id="GO:1990599">
    <property type="term" value="F:3' overhang single-stranded DNA endodeoxyribonuclease activity"/>
    <property type="evidence" value="ECO:0007669"/>
    <property type="project" value="Ensembl"/>
</dbReference>
<dbReference type="GO" id="GO:0003684">
    <property type="term" value="F:damaged DNA binding"/>
    <property type="evidence" value="ECO:0007669"/>
    <property type="project" value="Ensembl"/>
</dbReference>
<dbReference type="GO" id="GO:0042802">
    <property type="term" value="F:identical protein binding"/>
    <property type="evidence" value="ECO:0007669"/>
    <property type="project" value="Ensembl"/>
</dbReference>
<dbReference type="GO" id="GO:1990841">
    <property type="term" value="F:promoter-specific chromatin binding"/>
    <property type="evidence" value="ECO:0000314"/>
    <property type="project" value="MGI"/>
</dbReference>
<dbReference type="GO" id="GO:0003697">
    <property type="term" value="F:single-stranded DNA binding"/>
    <property type="evidence" value="ECO:0007669"/>
    <property type="project" value="Ensembl"/>
</dbReference>
<dbReference type="GO" id="GO:0001094">
    <property type="term" value="F:TFIID-class transcription factor complex binding"/>
    <property type="evidence" value="ECO:0000314"/>
    <property type="project" value="MGI"/>
</dbReference>
<dbReference type="GO" id="GO:0034644">
    <property type="term" value="P:cellular response to UV"/>
    <property type="evidence" value="ECO:0000250"/>
    <property type="project" value="UniProtKB"/>
</dbReference>
<dbReference type="GO" id="GO:0006281">
    <property type="term" value="P:DNA repair"/>
    <property type="evidence" value="ECO:0000315"/>
    <property type="project" value="MGI"/>
</dbReference>
<dbReference type="GO" id="GO:0000724">
    <property type="term" value="P:double-strand break repair via homologous recombination"/>
    <property type="evidence" value="ECO:0007669"/>
    <property type="project" value="Ensembl"/>
</dbReference>
<dbReference type="GO" id="GO:0006303">
    <property type="term" value="P:double-strand break repair via nonhomologous end joining"/>
    <property type="evidence" value="ECO:0007669"/>
    <property type="project" value="Ensembl"/>
</dbReference>
<dbReference type="GO" id="GO:1905765">
    <property type="term" value="P:negative regulation of protection from non-homologous end joining at telomere"/>
    <property type="evidence" value="ECO:0007669"/>
    <property type="project" value="Ensembl"/>
</dbReference>
<dbReference type="GO" id="GO:1904357">
    <property type="term" value="P:negative regulation of telomere maintenance via telomere lengthening"/>
    <property type="evidence" value="ECO:0007669"/>
    <property type="project" value="Ensembl"/>
</dbReference>
<dbReference type="GO" id="GO:0006289">
    <property type="term" value="P:nucleotide-excision repair"/>
    <property type="evidence" value="ECO:0000250"/>
    <property type="project" value="UniProtKB"/>
</dbReference>
<dbReference type="GO" id="GO:1901255">
    <property type="term" value="P:nucleotide-excision repair involved in interstrand cross-link repair"/>
    <property type="evidence" value="ECO:0000250"/>
    <property type="project" value="UniProtKB"/>
</dbReference>
<dbReference type="GO" id="GO:0010506">
    <property type="term" value="P:regulation of autophagy"/>
    <property type="evidence" value="ECO:0000315"/>
    <property type="project" value="MGI"/>
</dbReference>
<dbReference type="GO" id="GO:0061819">
    <property type="term" value="P:telomeric DNA-containing double minutes formation"/>
    <property type="evidence" value="ECO:0007669"/>
    <property type="project" value="Ensembl"/>
</dbReference>
<dbReference type="GO" id="GO:0009650">
    <property type="term" value="P:UV protection"/>
    <property type="evidence" value="ECO:0000315"/>
    <property type="project" value="MGI"/>
</dbReference>
<dbReference type="CDD" id="cd20078">
    <property type="entry name" value="XPF_nuclease_XPF_euk"/>
    <property type="match status" value="1"/>
</dbReference>
<dbReference type="FunFam" id="3.40.50.10130:FF:000002">
    <property type="entry name" value="DNA repair endonuclease XPF"/>
    <property type="match status" value="1"/>
</dbReference>
<dbReference type="FunFam" id="1.10.150.20:FF:000040">
    <property type="entry name" value="DNA repair endonuclease XPF isoform X2"/>
    <property type="match status" value="1"/>
</dbReference>
<dbReference type="Gene3D" id="3.40.50.10130">
    <property type="match status" value="1"/>
</dbReference>
<dbReference type="Gene3D" id="1.10.150.20">
    <property type="entry name" value="5' to 3' exonuclease, C-terminal subdomain"/>
    <property type="match status" value="1"/>
</dbReference>
<dbReference type="InterPro" id="IPR006166">
    <property type="entry name" value="ERCC4_domain"/>
</dbReference>
<dbReference type="InterPro" id="IPR011335">
    <property type="entry name" value="Restrct_endonuc-II-like"/>
</dbReference>
<dbReference type="InterPro" id="IPR010994">
    <property type="entry name" value="RuvA_2-like"/>
</dbReference>
<dbReference type="InterPro" id="IPR006167">
    <property type="entry name" value="XPF"/>
</dbReference>
<dbReference type="InterPro" id="IPR047520">
    <property type="entry name" value="XPF_nuclease"/>
</dbReference>
<dbReference type="NCBIfam" id="TIGR00596">
    <property type="entry name" value="rad1"/>
    <property type="match status" value="1"/>
</dbReference>
<dbReference type="PANTHER" id="PTHR10150">
    <property type="entry name" value="DNA REPAIR ENDONUCLEASE XPF"/>
    <property type="match status" value="1"/>
</dbReference>
<dbReference type="PANTHER" id="PTHR10150:SF0">
    <property type="entry name" value="DNA REPAIR ENDONUCLEASE XPF"/>
    <property type="match status" value="1"/>
</dbReference>
<dbReference type="Pfam" id="PF02732">
    <property type="entry name" value="ERCC4"/>
    <property type="match status" value="1"/>
</dbReference>
<dbReference type="SMART" id="SM00891">
    <property type="entry name" value="ERCC4"/>
    <property type="match status" value="1"/>
</dbReference>
<dbReference type="SUPFAM" id="SSF52980">
    <property type="entry name" value="Restriction endonuclease-like"/>
    <property type="match status" value="1"/>
</dbReference>
<dbReference type="SUPFAM" id="SSF47781">
    <property type="entry name" value="RuvA domain 2-like"/>
    <property type="match status" value="1"/>
</dbReference>